<evidence type="ECO:0000255" key="1">
    <source>
        <dbReference type="HAMAP-Rule" id="MF_00436"/>
    </source>
</evidence>
<evidence type="ECO:0000255" key="2">
    <source>
        <dbReference type="PROSITE-ProRule" id="PRU01346"/>
    </source>
</evidence>
<evidence type="ECO:0000256" key="3">
    <source>
        <dbReference type="SAM" id="MobiDB-lite"/>
    </source>
</evidence>
<name>HFQ_XANCP</name>
<accession>Q8P9X7</accession>
<keyword id="KW-1185">Reference proteome</keyword>
<keyword id="KW-0694">RNA-binding</keyword>
<keyword id="KW-0346">Stress response</keyword>
<sequence>MAKGQSLQDPFLNALRRERVPVSVYLVNGIKLQGTIESFDQFVVLLRNTVSQMVYKHAISTVVPARNVRVGPGGGYVQSNENNQAEDDDVEQ</sequence>
<protein>
    <recommendedName>
        <fullName evidence="1">RNA-binding protein Hfq</fullName>
    </recommendedName>
</protein>
<feature type="chain" id="PRO_0000095672" description="RNA-binding protein Hfq">
    <location>
        <begin position="1"/>
        <end position="92"/>
    </location>
</feature>
<feature type="domain" description="Sm" evidence="2">
    <location>
        <begin position="9"/>
        <end position="68"/>
    </location>
</feature>
<feature type="region of interest" description="Disordered" evidence="3">
    <location>
        <begin position="72"/>
        <end position="92"/>
    </location>
</feature>
<gene>
    <name evidence="1" type="primary">hfq</name>
    <name type="ordered locus">XCC1716</name>
</gene>
<comment type="function">
    <text evidence="1">RNA chaperone that binds small regulatory RNA (sRNAs) and mRNAs to facilitate mRNA translational regulation in response to envelope stress, environmental stress and changes in metabolite concentrations. Also binds with high specificity to tRNAs.</text>
</comment>
<comment type="subunit">
    <text evidence="1">Homohexamer.</text>
</comment>
<comment type="similarity">
    <text evidence="1">Belongs to the Hfq family.</text>
</comment>
<reference key="1">
    <citation type="journal article" date="2002" name="Nature">
        <title>Comparison of the genomes of two Xanthomonas pathogens with differing host specificities.</title>
        <authorList>
            <person name="da Silva A.C.R."/>
            <person name="Ferro J.A."/>
            <person name="Reinach F.C."/>
            <person name="Farah C.S."/>
            <person name="Furlan L.R."/>
            <person name="Quaggio R.B."/>
            <person name="Monteiro-Vitorello C.B."/>
            <person name="Van Sluys M.A."/>
            <person name="Almeida N.F. Jr."/>
            <person name="Alves L.M.C."/>
            <person name="do Amaral A.M."/>
            <person name="Bertolini M.C."/>
            <person name="Camargo L.E.A."/>
            <person name="Camarotte G."/>
            <person name="Cannavan F."/>
            <person name="Cardozo J."/>
            <person name="Chambergo F."/>
            <person name="Ciapina L.P."/>
            <person name="Cicarelli R.M.B."/>
            <person name="Coutinho L.L."/>
            <person name="Cursino-Santos J.R."/>
            <person name="El-Dorry H."/>
            <person name="Faria J.B."/>
            <person name="Ferreira A.J.S."/>
            <person name="Ferreira R.C.C."/>
            <person name="Ferro M.I.T."/>
            <person name="Formighieri E.F."/>
            <person name="Franco M.C."/>
            <person name="Greggio C.C."/>
            <person name="Gruber A."/>
            <person name="Katsuyama A.M."/>
            <person name="Kishi L.T."/>
            <person name="Leite R.P."/>
            <person name="Lemos E.G.M."/>
            <person name="Lemos M.V.F."/>
            <person name="Locali E.C."/>
            <person name="Machado M.A."/>
            <person name="Madeira A.M.B.N."/>
            <person name="Martinez-Rossi N.M."/>
            <person name="Martins E.C."/>
            <person name="Meidanis J."/>
            <person name="Menck C.F.M."/>
            <person name="Miyaki C.Y."/>
            <person name="Moon D.H."/>
            <person name="Moreira L.M."/>
            <person name="Novo M.T.M."/>
            <person name="Okura V.K."/>
            <person name="Oliveira M.C."/>
            <person name="Oliveira V.R."/>
            <person name="Pereira H.A."/>
            <person name="Rossi A."/>
            <person name="Sena J.A.D."/>
            <person name="Silva C."/>
            <person name="de Souza R.F."/>
            <person name="Spinola L.A.F."/>
            <person name="Takita M.A."/>
            <person name="Tamura R.E."/>
            <person name="Teixeira E.C."/>
            <person name="Tezza R.I.D."/>
            <person name="Trindade dos Santos M."/>
            <person name="Truffi D."/>
            <person name="Tsai S.M."/>
            <person name="White F.F."/>
            <person name="Setubal J.C."/>
            <person name="Kitajima J.P."/>
        </authorList>
    </citation>
    <scope>NUCLEOTIDE SEQUENCE [LARGE SCALE GENOMIC DNA]</scope>
    <source>
        <strain>ATCC 33913 / DSM 3586 / NCPPB 528 / LMG 568 / P 25</strain>
    </source>
</reference>
<proteinExistence type="inferred from homology"/>
<dbReference type="EMBL" id="AE008922">
    <property type="protein sequence ID" value="AAM41010.1"/>
    <property type="molecule type" value="Genomic_DNA"/>
</dbReference>
<dbReference type="RefSeq" id="NP_637086.1">
    <property type="nucleotide sequence ID" value="NC_003902.1"/>
</dbReference>
<dbReference type="RefSeq" id="WP_011036893.1">
    <property type="nucleotide sequence ID" value="NC_003902.1"/>
</dbReference>
<dbReference type="SMR" id="Q8P9X7"/>
<dbReference type="STRING" id="190485.XCC1716"/>
<dbReference type="EnsemblBacteria" id="AAM41010">
    <property type="protein sequence ID" value="AAM41010"/>
    <property type="gene ID" value="XCC1716"/>
</dbReference>
<dbReference type="GeneID" id="58013730"/>
<dbReference type="KEGG" id="xcc:XCC1716"/>
<dbReference type="PATRIC" id="fig|190485.4.peg.1831"/>
<dbReference type="eggNOG" id="COG1923">
    <property type="taxonomic scope" value="Bacteria"/>
</dbReference>
<dbReference type="HOGENOM" id="CLU_113688_2_0_6"/>
<dbReference type="OrthoDB" id="9799751at2"/>
<dbReference type="Proteomes" id="UP000001010">
    <property type="component" value="Chromosome"/>
</dbReference>
<dbReference type="GO" id="GO:0005829">
    <property type="term" value="C:cytosol"/>
    <property type="evidence" value="ECO:0000318"/>
    <property type="project" value="GO_Central"/>
</dbReference>
<dbReference type="GO" id="GO:0003723">
    <property type="term" value="F:RNA binding"/>
    <property type="evidence" value="ECO:0000318"/>
    <property type="project" value="GO_Central"/>
</dbReference>
<dbReference type="GO" id="GO:0006355">
    <property type="term" value="P:regulation of DNA-templated transcription"/>
    <property type="evidence" value="ECO:0007669"/>
    <property type="project" value="InterPro"/>
</dbReference>
<dbReference type="GO" id="GO:0043487">
    <property type="term" value="P:regulation of RNA stability"/>
    <property type="evidence" value="ECO:0000318"/>
    <property type="project" value="GO_Central"/>
</dbReference>
<dbReference type="GO" id="GO:0045974">
    <property type="term" value="P:regulation of translation, ncRNA-mediated"/>
    <property type="evidence" value="ECO:0000318"/>
    <property type="project" value="GO_Central"/>
</dbReference>
<dbReference type="CDD" id="cd01716">
    <property type="entry name" value="Hfq"/>
    <property type="match status" value="1"/>
</dbReference>
<dbReference type="FunFam" id="2.30.30.100:FF:000001">
    <property type="entry name" value="RNA-binding protein Hfq"/>
    <property type="match status" value="1"/>
</dbReference>
<dbReference type="Gene3D" id="2.30.30.100">
    <property type="match status" value="1"/>
</dbReference>
<dbReference type="HAMAP" id="MF_00436">
    <property type="entry name" value="Hfq"/>
    <property type="match status" value="1"/>
</dbReference>
<dbReference type="InterPro" id="IPR005001">
    <property type="entry name" value="Hfq"/>
</dbReference>
<dbReference type="InterPro" id="IPR010920">
    <property type="entry name" value="LSM_dom_sf"/>
</dbReference>
<dbReference type="InterPro" id="IPR047575">
    <property type="entry name" value="Sm"/>
</dbReference>
<dbReference type="NCBIfam" id="TIGR02383">
    <property type="entry name" value="Hfq"/>
    <property type="match status" value="1"/>
</dbReference>
<dbReference type="NCBIfam" id="NF001602">
    <property type="entry name" value="PRK00395.1"/>
    <property type="match status" value="1"/>
</dbReference>
<dbReference type="PANTHER" id="PTHR34772">
    <property type="entry name" value="RNA-BINDING PROTEIN HFQ"/>
    <property type="match status" value="1"/>
</dbReference>
<dbReference type="PANTHER" id="PTHR34772:SF1">
    <property type="entry name" value="RNA-BINDING PROTEIN HFQ"/>
    <property type="match status" value="1"/>
</dbReference>
<dbReference type="Pfam" id="PF17209">
    <property type="entry name" value="Hfq"/>
    <property type="match status" value="1"/>
</dbReference>
<dbReference type="SUPFAM" id="SSF50182">
    <property type="entry name" value="Sm-like ribonucleoproteins"/>
    <property type="match status" value="1"/>
</dbReference>
<dbReference type="PROSITE" id="PS52002">
    <property type="entry name" value="SM"/>
    <property type="match status" value="1"/>
</dbReference>
<organism>
    <name type="scientific">Xanthomonas campestris pv. campestris (strain ATCC 33913 / DSM 3586 / NCPPB 528 / LMG 568 / P 25)</name>
    <dbReference type="NCBI Taxonomy" id="190485"/>
    <lineage>
        <taxon>Bacteria</taxon>
        <taxon>Pseudomonadati</taxon>
        <taxon>Pseudomonadota</taxon>
        <taxon>Gammaproteobacteria</taxon>
        <taxon>Lysobacterales</taxon>
        <taxon>Lysobacteraceae</taxon>
        <taxon>Xanthomonas</taxon>
    </lineage>
</organism>